<evidence type="ECO:0000255" key="1">
    <source>
        <dbReference type="HAMAP-Rule" id="MF_00089"/>
    </source>
</evidence>
<evidence type="ECO:0000256" key="2">
    <source>
        <dbReference type="SAM" id="MobiDB-lite"/>
    </source>
</evidence>
<reference key="1">
    <citation type="journal article" date="2007" name="Nat. Genet.">
        <title>Genomic analysis of Bartonella identifies type IV secretion systems as host adaptability factors.</title>
        <authorList>
            <person name="Saenz H.L."/>
            <person name="Engel P."/>
            <person name="Stoeckli M.C."/>
            <person name="Lanz C."/>
            <person name="Raddatz G."/>
            <person name="Vayssier-Taussat M."/>
            <person name="Birtles R."/>
            <person name="Schuster S.C."/>
            <person name="Dehio C."/>
        </authorList>
    </citation>
    <scope>NUCLEOTIDE SEQUENCE [LARGE SCALE GENOMIC DNA]</scope>
    <source>
        <strain>CIP 105476 / IBS 506</strain>
    </source>
</reference>
<name>THIC_BART1</name>
<protein>
    <recommendedName>
        <fullName evidence="1">Phosphomethylpyrimidine synthase</fullName>
        <ecNumber evidence="1">4.1.99.17</ecNumber>
    </recommendedName>
    <alternativeName>
        <fullName evidence="1">Hydroxymethylpyrimidine phosphate synthase</fullName>
        <shortName evidence="1">HMP-P synthase</shortName>
        <shortName evidence="1">HMP-phosphate synthase</shortName>
        <shortName evidence="1">HMPP synthase</shortName>
    </alternativeName>
    <alternativeName>
        <fullName evidence="1">Thiamine biosynthesis protein ThiC</fullName>
    </alternativeName>
</protein>
<feature type="chain" id="PRO_1000075433" description="Phosphomethylpyrimidine synthase">
    <location>
        <begin position="1"/>
        <end position="606"/>
    </location>
</feature>
<feature type="region of interest" description="Disordered" evidence="2">
    <location>
        <begin position="84"/>
        <end position="103"/>
    </location>
</feature>
<feature type="binding site" evidence="1">
    <location>
        <position position="209"/>
    </location>
    <ligand>
        <name>substrate</name>
    </ligand>
</feature>
<feature type="binding site" evidence="1">
    <location>
        <position position="238"/>
    </location>
    <ligand>
        <name>substrate</name>
    </ligand>
</feature>
<feature type="binding site" evidence="1">
    <location>
        <position position="267"/>
    </location>
    <ligand>
        <name>substrate</name>
    </ligand>
</feature>
<feature type="binding site" evidence="1">
    <location>
        <position position="303"/>
    </location>
    <ligand>
        <name>substrate</name>
    </ligand>
</feature>
<feature type="binding site" evidence="1">
    <location>
        <begin position="323"/>
        <end position="325"/>
    </location>
    <ligand>
        <name>substrate</name>
    </ligand>
</feature>
<feature type="binding site" evidence="1">
    <location>
        <begin position="364"/>
        <end position="367"/>
    </location>
    <ligand>
        <name>substrate</name>
    </ligand>
</feature>
<feature type="binding site" evidence="1">
    <location>
        <position position="403"/>
    </location>
    <ligand>
        <name>substrate</name>
    </ligand>
</feature>
<feature type="binding site" evidence="1">
    <location>
        <position position="407"/>
    </location>
    <ligand>
        <name>Zn(2+)</name>
        <dbReference type="ChEBI" id="CHEBI:29105"/>
    </ligand>
</feature>
<feature type="binding site" evidence="1">
    <location>
        <position position="430"/>
    </location>
    <ligand>
        <name>substrate</name>
    </ligand>
</feature>
<feature type="binding site" evidence="1">
    <location>
        <position position="471"/>
    </location>
    <ligand>
        <name>Zn(2+)</name>
        <dbReference type="ChEBI" id="CHEBI:29105"/>
    </ligand>
</feature>
<feature type="binding site" evidence="1">
    <location>
        <position position="551"/>
    </location>
    <ligand>
        <name>[4Fe-4S] cluster</name>
        <dbReference type="ChEBI" id="CHEBI:49883"/>
        <note>4Fe-4S-S-AdoMet</note>
    </ligand>
</feature>
<feature type="binding site" evidence="1">
    <location>
        <position position="554"/>
    </location>
    <ligand>
        <name>[4Fe-4S] cluster</name>
        <dbReference type="ChEBI" id="CHEBI:49883"/>
        <note>4Fe-4S-S-AdoMet</note>
    </ligand>
</feature>
<feature type="binding site" evidence="1">
    <location>
        <position position="559"/>
    </location>
    <ligand>
        <name>[4Fe-4S] cluster</name>
        <dbReference type="ChEBI" id="CHEBI:49883"/>
        <note>4Fe-4S-S-AdoMet</note>
    </ligand>
</feature>
<comment type="function">
    <text evidence="1">Catalyzes the synthesis of the hydroxymethylpyrimidine phosphate (HMP-P) moiety of thiamine from aminoimidazole ribotide (AIR) in a radical S-adenosyl-L-methionine (SAM)-dependent reaction.</text>
</comment>
<comment type="catalytic activity">
    <reaction evidence="1">
        <text>5-amino-1-(5-phospho-beta-D-ribosyl)imidazole + S-adenosyl-L-methionine = 4-amino-2-methyl-5-(phosphooxymethyl)pyrimidine + CO + 5'-deoxyadenosine + formate + L-methionine + 3 H(+)</text>
        <dbReference type="Rhea" id="RHEA:24840"/>
        <dbReference type="ChEBI" id="CHEBI:15378"/>
        <dbReference type="ChEBI" id="CHEBI:15740"/>
        <dbReference type="ChEBI" id="CHEBI:17245"/>
        <dbReference type="ChEBI" id="CHEBI:17319"/>
        <dbReference type="ChEBI" id="CHEBI:57844"/>
        <dbReference type="ChEBI" id="CHEBI:58354"/>
        <dbReference type="ChEBI" id="CHEBI:59789"/>
        <dbReference type="ChEBI" id="CHEBI:137981"/>
        <dbReference type="EC" id="4.1.99.17"/>
    </reaction>
</comment>
<comment type="cofactor">
    <cofactor evidence="1">
        <name>[4Fe-4S] cluster</name>
        <dbReference type="ChEBI" id="CHEBI:49883"/>
    </cofactor>
    <text evidence="1">Binds 1 [4Fe-4S] cluster per subunit. The cluster is coordinated with 3 cysteines and an exchangeable S-adenosyl-L-methionine.</text>
</comment>
<comment type="pathway">
    <text evidence="1">Cofactor biosynthesis; thiamine diphosphate biosynthesis.</text>
</comment>
<comment type="subunit">
    <text evidence="1">Homodimer.</text>
</comment>
<comment type="similarity">
    <text evidence="1">Belongs to the ThiC family.</text>
</comment>
<sequence length="606" mass="67268">MSKNIPLISCSPFPASRKIYQQSPLFSDVRVPLREISLTDGSGEKPLNVYDTSGPYTDKEAIIDLTKGLPAIGSSWLSKRADTEPYPARSVKPEDNGLTSSPIPAFEKKRPILRAKSGKAITQMAYARAGIITAEMEYVAIRENEGLAIKDQQTVQSSPLGGEIPEIYTAEFVRNEIANGRAIIPQNINHPECEPMIIGRNFRVKINANIGNSAVTSSMAEEVDKMVWAIRWGADTVMDLSTGRNIHNIREWIIRNSPVPIGTVPLYQALEKVQGIAENLTWDIFRDTLIEQAEQGVDYFTIHAGLRLPFIPMTIDRITGIVSRGGSIMAKWCLHHHKESFLYENFDEICDIASTYDISLSLGDGLRPGSIADANDEAQFAELKTLGELTKTAWEKNVQVMIEGPGHVPMHKIKENMEQQLDLCHEAPFYTLGPLTTDIAPGYDHITSAIGAAMIGWFGTAMLCYVTPKEHLGLPDKNDVKTGVITYKIAAHAADLAKGLPRAQLRDNALSRARFDFRWHDQFNLSLDPETACAFHDETMPKDAHKLVHFCSMCGPKFCSMRISHDIRDAAALKKAKGEGMVAMAEKYQERGDIYVEAPQKKRVNS</sequence>
<dbReference type="EC" id="4.1.99.17" evidence="1"/>
<dbReference type="EMBL" id="AM260525">
    <property type="protein sequence ID" value="CAK01183.1"/>
    <property type="molecule type" value="Genomic_DNA"/>
</dbReference>
<dbReference type="RefSeq" id="WP_012231296.1">
    <property type="nucleotide sequence ID" value="NC_010161.1"/>
</dbReference>
<dbReference type="SMR" id="A9IRH7"/>
<dbReference type="KEGG" id="btr:BT_0766"/>
<dbReference type="eggNOG" id="COG0422">
    <property type="taxonomic scope" value="Bacteria"/>
</dbReference>
<dbReference type="HOGENOM" id="CLU_013181_2_1_5"/>
<dbReference type="UniPathway" id="UPA00060"/>
<dbReference type="Proteomes" id="UP000001592">
    <property type="component" value="Chromosome"/>
</dbReference>
<dbReference type="GO" id="GO:0005829">
    <property type="term" value="C:cytosol"/>
    <property type="evidence" value="ECO:0007669"/>
    <property type="project" value="TreeGrafter"/>
</dbReference>
<dbReference type="GO" id="GO:0051539">
    <property type="term" value="F:4 iron, 4 sulfur cluster binding"/>
    <property type="evidence" value="ECO:0007669"/>
    <property type="project" value="UniProtKB-KW"/>
</dbReference>
<dbReference type="GO" id="GO:0016830">
    <property type="term" value="F:carbon-carbon lyase activity"/>
    <property type="evidence" value="ECO:0007669"/>
    <property type="project" value="InterPro"/>
</dbReference>
<dbReference type="GO" id="GO:0008270">
    <property type="term" value="F:zinc ion binding"/>
    <property type="evidence" value="ECO:0007669"/>
    <property type="project" value="UniProtKB-UniRule"/>
</dbReference>
<dbReference type="GO" id="GO:0009228">
    <property type="term" value="P:thiamine biosynthetic process"/>
    <property type="evidence" value="ECO:0007669"/>
    <property type="project" value="UniProtKB-KW"/>
</dbReference>
<dbReference type="GO" id="GO:0009229">
    <property type="term" value="P:thiamine diphosphate biosynthetic process"/>
    <property type="evidence" value="ECO:0007669"/>
    <property type="project" value="UniProtKB-UniRule"/>
</dbReference>
<dbReference type="FunFam" id="3.20.20.540:FF:000001">
    <property type="entry name" value="Phosphomethylpyrimidine synthase"/>
    <property type="match status" value="1"/>
</dbReference>
<dbReference type="Gene3D" id="6.10.250.620">
    <property type="match status" value="1"/>
</dbReference>
<dbReference type="Gene3D" id="3.20.20.540">
    <property type="entry name" value="Radical SAM ThiC family, central domain"/>
    <property type="match status" value="1"/>
</dbReference>
<dbReference type="HAMAP" id="MF_00089">
    <property type="entry name" value="ThiC"/>
    <property type="match status" value="1"/>
</dbReference>
<dbReference type="InterPro" id="IPR037509">
    <property type="entry name" value="ThiC"/>
</dbReference>
<dbReference type="InterPro" id="IPR025747">
    <property type="entry name" value="ThiC-associated_dom"/>
</dbReference>
<dbReference type="InterPro" id="IPR038521">
    <property type="entry name" value="ThiC/Bza_core_dom"/>
</dbReference>
<dbReference type="InterPro" id="IPR002817">
    <property type="entry name" value="ThiC/BzaA/B"/>
</dbReference>
<dbReference type="NCBIfam" id="NF006763">
    <property type="entry name" value="PRK09284.1"/>
    <property type="match status" value="1"/>
</dbReference>
<dbReference type="NCBIfam" id="NF009895">
    <property type="entry name" value="PRK13352.1"/>
    <property type="match status" value="1"/>
</dbReference>
<dbReference type="NCBIfam" id="TIGR00190">
    <property type="entry name" value="thiC"/>
    <property type="match status" value="1"/>
</dbReference>
<dbReference type="PANTHER" id="PTHR30557:SF1">
    <property type="entry name" value="PHOSPHOMETHYLPYRIMIDINE SYNTHASE, CHLOROPLASTIC"/>
    <property type="match status" value="1"/>
</dbReference>
<dbReference type="PANTHER" id="PTHR30557">
    <property type="entry name" value="THIAMINE BIOSYNTHESIS PROTEIN THIC"/>
    <property type="match status" value="1"/>
</dbReference>
<dbReference type="Pfam" id="PF13667">
    <property type="entry name" value="ThiC-associated"/>
    <property type="match status" value="1"/>
</dbReference>
<dbReference type="Pfam" id="PF01964">
    <property type="entry name" value="ThiC_Rad_SAM"/>
    <property type="match status" value="1"/>
</dbReference>
<dbReference type="SFLD" id="SFLDF00407">
    <property type="entry name" value="phosphomethylpyrimidine_syntha"/>
    <property type="match status" value="1"/>
</dbReference>
<dbReference type="SFLD" id="SFLDG01114">
    <property type="entry name" value="phosphomethylpyrimidine_syntha"/>
    <property type="match status" value="1"/>
</dbReference>
<dbReference type="SFLD" id="SFLDS00113">
    <property type="entry name" value="Radical_SAM_Phosphomethylpyrim"/>
    <property type="match status" value="1"/>
</dbReference>
<organism>
    <name type="scientific">Bartonella tribocorum (strain CIP 105476 / IBS 506)</name>
    <dbReference type="NCBI Taxonomy" id="382640"/>
    <lineage>
        <taxon>Bacteria</taxon>
        <taxon>Pseudomonadati</taxon>
        <taxon>Pseudomonadota</taxon>
        <taxon>Alphaproteobacteria</taxon>
        <taxon>Hyphomicrobiales</taxon>
        <taxon>Bartonellaceae</taxon>
        <taxon>Bartonella</taxon>
    </lineage>
</organism>
<gene>
    <name evidence="1" type="primary">thiC</name>
    <name type="ordered locus">BT_0766</name>
</gene>
<keyword id="KW-0004">4Fe-4S</keyword>
<keyword id="KW-0408">Iron</keyword>
<keyword id="KW-0411">Iron-sulfur</keyword>
<keyword id="KW-0456">Lyase</keyword>
<keyword id="KW-0479">Metal-binding</keyword>
<keyword id="KW-0949">S-adenosyl-L-methionine</keyword>
<keyword id="KW-0784">Thiamine biosynthesis</keyword>
<keyword id="KW-0862">Zinc</keyword>
<accession>A9IRH7</accession>
<proteinExistence type="inferred from homology"/>